<gene>
    <name evidence="1" type="primary">gltX</name>
    <name type="ordered locus">Sbal_2802</name>
</gene>
<evidence type="ECO:0000255" key="1">
    <source>
        <dbReference type="HAMAP-Rule" id="MF_00022"/>
    </source>
</evidence>
<proteinExistence type="inferred from homology"/>
<reference key="1">
    <citation type="submission" date="2007-02" db="EMBL/GenBank/DDBJ databases">
        <title>Complete sequence of chromosome of Shewanella baltica OS155.</title>
        <authorList>
            <consortium name="US DOE Joint Genome Institute"/>
            <person name="Copeland A."/>
            <person name="Lucas S."/>
            <person name="Lapidus A."/>
            <person name="Barry K."/>
            <person name="Detter J.C."/>
            <person name="Glavina del Rio T."/>
            <person name="Hammon N."/>
            <person name="Israni S."/>
            <person name="Dalin E."/>
            <person name="Tice H."/>
            <person name="Pitluck S."/>
            <person name="Sims D.R."/>
            <person name="Brettin T."/>
            <person name="Bruce D."/>
            <person name="Han C."/>
            <person name="Tapia R."/>
            <person name="Brainard J."/>
            <person name="Schmutz J."/>
            <person name="Larimer F."/>
            <person name="Land M."/>
            <person name="Hauser L."/>
            <person name="Kyrpides N."/>
            <person name="Mikhailova N."/>
            <person name="Brettar I."/>
            <person name="Klappenbach J."/>
            <person name="Konstantinidis K."/>
            <person name="Rodrigues J."/>
            <person name="Tiedje J."/>
            <person name="Richardson P."/>
        </authorList>
    </citation>
    <scope>NUCLEOTIDE SEQUENCE [LARGE SCALE GENOMIC DNA]</scope>
    <source>
        <strain>OS155 / ATCC BAA-1091</strain>
    </source>
</reference>
<accession>A3D6C6</accession>
<keyword id="KW-0030">Aminoacyl-tRNA synthetase</keyword>
<keyword id="KW-0067">ATP-binding</keyword>
<keyword id="KW-0963">Cytoplasm</keyword>
<keyword id="KW-0436">Ligase</keyword>
<keyword id="KW-0479">Metal-binding</keyword>
<keyword id="KW-0547">Nucleotide-binding</keyword>
<keyword id="KW-0648">Protein biosynthesis</keyword>
<keyword id="KW-1185">Reference proteome</keyword>
<keyword id="KW-0862">Zinc</keyword>
<organism>
    <name type="scientific">Shewanella baltica (strain OS155 / ATCC BAA-1091)</name>
    <dbReference type="NCBI Taxonomy" id="325240"/>
    <lineage>
        <taxon>Bacteria</taxon>
        <taxon>Pseudomonadati</taxon>
        <taxon>Pseudomonadota</taxon>
        <taxon>Gammaproteobacteria</taxon>
        <taxon>Alteromonadales</taxon>
        <taxon>Shewanellaceae</taxon>
        <taxon>Shewanella</taxon>
    </lineage>
</organism>
<dbReference type="EC" id="6.1.1.17" evidence="1"/>
<dbReference type="EMBL" id="CP000563">
    <property type="protein sequence ID" value="ABN62289.1"/>
    <property type="molecule type" value="Genomic_DNA"/>
</dbReference>
<dbReference type="RefSeq" id="WP_011847219.1">
    <property type="nucleotide sequence ID" value="NC_009052.1"/>
</dbReference>
<dbReference type="SMR" id="A3D6C6"/>
<dbReference type="STRING" id="325240.Sbal_2802"/>
<dbReference type="KEGG" id="sbl:Sbal_2802"/>
<dbReference type="HOGENOM" id="CLU_015768_6_3_6"/>
<dbReference type="OrthoDB" id="9807503at2"/>
<dbReference type="Proteomes" id="UP000001557">
    <property type="component" value="Chromosome"/>
</dbReference>
<dbReference type="GO" id="GO:0005829">
    <property type="term" value="C:cytosol"/>
    <property type="evidence" value="ECO:0007669"/>
    <property type="project" value="TreeGrafter"/>
</dbReference>
<dbReference type="GO" id="GO:0005524">
    <property type="term" value="F:ATP binding"/>
    <property type="evidence" value="ECO:0007669"/>
    <property type="project" value="UniProtKB-UniRule"/>
</dbReference>
<dbReference type="GO" id="GO:0004818">
    <property type="term" value="F:glutamate-tRNA ligase activity"/>
    <property type="evidence" value="ECO:0007669"/>
    <property type="project" value="UniProtKB-UniRule"/>
</dbReference>
<dbReference type="GO" id="GO:0000049">
    <property type="term" value="F:tRNA binding"/>
    <property type="evidence" value="ECO:0007669"/>
    <property type="project" value="InterPro"/>
</dbReference>
<dbReference type="GO" id="GO:0008270">
    <property type="term" value="F:zinc ion binding"/>
    <property type="evidence" value="ECO:0007669"/>
    <property type="project" value="UniProtKB-UniRule"/>
</dbReference>
<dbReference type="GO" id="GO:0006424">
    <property type="term" value="P:glutamyl-tRNA aminoacylation"/>
    <property type="evidence" value="ECO:0007669"/>
    <property type="project" value="UniProtKB-UniRule"/>
</dbReference>
<dbReference type="CDD" id="cd00808">
    <property type="entry name" value="GluRS_core"/>
    <property type="match status" value="1"/>
</dbReference>
<dbReference type="FunFam" id="1.10.10.350:FF:000001">
    <property type="entry name" value="Glutamate--tRNA ligase"/>
    <property type="match status" value="1"/>
</dbReference>
<dbReference type="FunFam" id="3.40.50.620:FF:000007">
    <property type="entry name" value="Glutamate--tRNA ligase"/>
    <property type="match status" value="1"/>
</dbReference>
<dbReference type="Gene3D" id="1.10.10.350">
    <property type="match status" value="1"/>
</dbReference>
<dbReference type="Gene3D" id="3.40.50.620">
    <property type="entry name" value="HUPs"/>
    <property type="match status" value="1"/>
</dbReference>
<dbReference type="HAMAP" id="MF_00022">
    <property type="entry name" value="Glu_tRNA_synth_type1"/>
    <property type="match status" value="1"/>
</dbReference>
<dbReference type="InterPro" id="IPR045462">
    <property type="entry name" value="aa-tRNA-synth_I_cd-bd"/>
</dbReference>
<dbReference type="InterPro" id="IPR020751">
    <property type="entry name" value="aa-tRNA-synth_I_codon-bd_sub2"/>
</dbReference>
<dbReference type="InterPro" id="IPR001412">
    <property type="entry name" value="aa-tRNA-synth_I_CS"/>
</dbReference>
<dbReference type="InterPro" id="IPR008925">
    <property type="entry name" value="aa_tRNA-synth_I_cd-bd_sf"/>
</dbReference>
<dbReference type="InterPro" id="IPR004527">
    <property type="entry name" value="Glu-tRNA-ligase_bac/mito"/>
</dbReference>
<dbReference type="InterPro" id="IPR000924">
    <property type="entry name" value="Glu/Gln-tRNA-synth"/>
</dbReference>
<dbReference type="InterPro" id="IPR020058">
    <property type="entry name" value="Glu/Gln-tRNA-synth_Ib_cat-dom"/>
</dbReference>
<dbReference type="InterPro" id="IPR049940">
    <property type="entry name" value="GluQ/Sye"/>
</dbReference>
<dbReference type="InterPro" id="IPR033910">
    <property type="entry name" value="GluRS_core"/>
</dbReference>
<dbReference type="InterPro" id="IPR014729">
    <property type="entry name" value="Rossmann-like_a/b/a_fold"/>
</dbReference>
<dbReference type="NCBIfam" id="TIGR00464">
    <property type="entry name" value="gltX_bact"/>
    <property type="match status" value="1"/>
</dbReference>
<dbReference type="PANTHER" id="PTHR43311">
    <property type="entry name" value="GLUTAMATE--TRNA LIGASE"/>
    <property type="match status" value="1"/>
</dbReference>
<dbReference type="PANTHER" id="PTHR43311:SF2">
    <property type="entry name" value="GLUTAMATE--TRNA LIGASE, MITOCHONDRIAL-RELATED"/>
    <property type="match status" value="1"/>
</dbReference>
<dbReference type="Pfam" id="PF19269">
    <property type="entry name" value="Anticodon_2"/>
    <property type="match status" value="1"/>
</dbReference>
<dbReference type="Pfam" id="PF00749">
    <property type="entry name" value="tRNA-synt_1c"/>
    <property type="match status" value="1"/>
</dbReference>
<dbReference type="PRINTS" id="PR00987">
    <property type="entry name" value="TRNASYNTHGLU"/>
</dbReference>
<dbReference type="SUPFAM" id="SSF48163">
    <property type="entry name" value="An anticodon-binding domain of class I aminoacyl-tRNA synthetases"/>
    <property type="match status" value="1"/>
</dbReference>
<dbReference type="SUPFAM" id="SSF52374">
    <property type="entry name" value="Nucleotidylyl transferase"/>
    <property type="match status" value="1"/>
</dbReference>
<dbReference type="PROSITE" id="PS00178">
    <property type="entry name" value="AA_TRNA_LIGASE_I"/>
    <property type="match status" value="1"/>
</dbReference>
<feature type="chain" id="PRO_1000001956" description="Glutamate--tRNA ligase">
    <location>
        <begin position="1"/>
        <end position="469"/>
    </location>
</feature>
<feature type="short sequence motif" description="'HIGH' region" evidence="1">
    <location>
        <begin position="9"/>
        <end position="19"/>
    </location>
</feature>
<feature type="short sequence motif" description="'KMSKS' region" evidence="1">
    <location>
        <begin position="236"/>
        <end position="240"/>
    </location>
</feature>
<feature type="binding site" evidence="1">
    <location>
        <position position="98"/>
    </location>
    <ligand>
        <name>Zn(2+)</name>
        <dbReference type="ChEBI" id="CHEBI:29105"/>
    </ligand>
</feature>
<feature type="binding site" evidence="1">
    <location>
        <position position="100"/>
    </location>
    <ligand>
        <name>Zn(2+)</name>
        <dbReference type="ChEBI" id="CHEBI:29105"/>
    </ligand>
</feature>
<feature type="binding site" evidence="1">
    <location>
        <position position="125"/>
    </location>
    <ligand>
        <name>Zn(2+)</name>
        <dbReference type="ChEBI" id="CHEBI:29105"/>
    </ligand>
</feature>
<feature type="binding site" evidence="1">
    <location>
        <position position="127"/>
    </location>
    <ligand>
        <name>Zn(2+)</name>
        <dbReference type="ChEBI" id="CHEBI:29105"/>
    </ligand>
</feature>
<feature type="binding site" evidence="1">
    <location>
        <position position="239"/>
    </location>
    <ligand>
        <name>ATP</name>
        <dbReference type="ChEBI" id="CHEBI:30616"/>
    </ligand>
</feature>
<sequence>MTTKTRFAPSPTGFLHVGGARTALYSWLQARANNGEFVLRIEDTDIERSTQAACDAILEGMNWLGLTWDEGPYYQTKRFDRYNEIIAQMLAKGTAYKCYCSRERIDALREAQAANGEAQKYDGCCRDLPARDTDEPFVVRFKNPIGGSVVFDDHVRGRIEFSNDALDDLIIARTDGVPTYNFCVVVDDWDMGITCVVRGEDHINNTPRQINILKALGAPIPEYAHVSMILGDDGAKLSKRHGAVSVMQYRDDGYLPEALLNYLVRLGWSHGDQEIFSLEEMKQYFKLGDINKAASAFNTDKLVWLNQHYIKSLAPEYVATHLQWHMDDQEIDLSNGPALAEVVTALAERAKTLKELAASSRYFYEDFAEFDEAQAKKHLRGVALEPLQLVQQKLAALTDWTVEAIHQAIEDTATELDVGMGKVGMPLRVAVTGAGQSPGLDITLFLIGRSRSEQRISKAIEFVADRINS</sequence>
<comment type="function">
    <text evidence="1">Catalyzes the attachment of glutamate to tRNA(Glu) in a two-step reaction: glutamate is first activated by ATP to form Glu-AMP and then transferred to the acceptor end of tRNA(Glu).</text>
</comment>
<comment type="catalytic activity">
    <reaction evidence="1">
        <text>tRNA(Glu) + L-glutamate + ATP = L-glutamyl-tRNA(Glu) + AMP + diphosphate</text>
        <dbReference type="Rhea" id="RHEA:23540"/>
        <dbReference type="Rhea" id="RHEA-COMP:9663"/>
        <dbReference type="Rhea" id="RHEA-COMP:9680"/>
        <dbReference type="ChEBI" id="CHEBI:29985"/>
        <dbReference type="ChEBI" id="CHEBI:30616"/>
        <dbReference type="ChEBI" id="CHEBI:33019"/>
        <dbReference type="ChEBI" id="CHEBI:78442"/>
        <dbReference type="ChEBI" id="CHEBI:78520"/>
        <dbReference type="ChEBI" id="CHEBI:456215"/>
        <dbReference type="EC" id="6.1.1.17"/>
    </reaction>
</comment>
<comment type="cofactor">
    <cofactor evidence="1">
        <name>Zn(2+)</name>
        <dbReference type="ChEBI" id="CHEBI:29105"/>
    </cofactor>
    <text evidence="1">Binds 1 zinc ion per subunit.</text>
</comment>
<comment type="subunit">
    <text evidence="1">Monomer.</text>
</comment>
<comment type="subcellular location">
    <subcellularLocation>
        <location evidence="1">Cytoplasm</location>
    </subcellularLocation>
</comment>
<comment type="similarity">
    <text evidence="1">Belongs to the class-I aminoacyl-tRNA synthetase family. Glutamate--tRNA ligase type 1 subfamily.</text>
</comment>
<protein>
    <recommendedName>
        <fullName evidence="1">Glutamate--tRNA ligase</fullName>
        <ecNumber evidence="1">6.1.1.17</ecNumber>
    </recommendedName>
    <alternativeName>
        <fullName evidence="1">Glutamyl-tRNA synthetase</fullName>
        <shortName evidence="1">GluRS</shortName>
    </alternativeName>
</protein>
<name>SYE_SHEB5</name>